<feature type="chain" id="PRO_0000053627" description="Estrogen receptor">
    <location>
        <begin position="1" status="less than"/>
        <end position="307"/>
    </location>
</feature>
<feature type="domain" description="NR LBD" evidence="3">
    <location>
        <begin position="96"/>
        <end position="307"/>
    </location>
</feature>
<feature type="DNA-binding region" description="Nuclear receptor" evidence="2">
    <location>
        <begin position="1" status="less than"/>
        <end position="43"/>
    </location>
</feature>
<feature type="zinc finger region" description="NR C4-type" evidence="2">
    <location>
        <begin position="7"/>
        <end position="31"/>
    </location>
</feature>
<feature type="region of interest" description="Hinge">
    <location>
        <begin position="44"/>
        <end position="95"/>
    </location>
</feature>
<feature type="non-terminal residue">
    <location>
        <position position="1"/>
    </location>
</feature>
<reference key="1">
    <citation type="journal article" date="1995" name="J. Steroid Biochem. Mol. Biol.">
        <title>Reptilian sex steroid receptors: amplification, sequence and expression analysis.</title>
        <authorList>
            <person name="Young L.J."/>
            <person name="Godwin J."/>
            <person name="Grammer M."/>
            <person name="Gahr M."/>
            <person name="Crews D."/>
        </authorList>
    </citation>
    <scope>NUCLEOTIDE SEQUENCE [MRNA]</scope>
    <source>
        <tissue>Kidney</tissue>
        <tissue>Oviduct</tissue>
    </source>
</reference>
<proteinExistence type="evidence at transcript level"/>
<protein>
    <recommendedName>
        <fullName>Estrogen receptor</fullName>
        <shortName>ER</shortName>
    </recommendedName>
    <alternativeName>
        <fullName>ER-alpha</fullName>
    </alternativeName>
    <alternativeName>
        <fullName>Estradiol receptor</fullName>
    </alternativeName>
    <alternativeName>
        <fullName>Nuclear receptor subfamily 3 group A member 1</fullName>
    </alternativeName>
</protein>
<sequence length="307" mass="35202">GHNDYMCPATNQCTIDKNRRKSCQACRLRKCYEVGMMKGGIRKDRRGGRILKHKRQREEHDNRNAGAIVERRSPNLWPSPLMITHNKKNSPALSLTADQIVSALLEAEPPVVYSEYDPSRPFSEASMMTLLTNLADRELVHMINWAKRVPGFVDLSLHDQVHLLECAWLEILMIGLVWRSVEHPGKLLFAPNLLLDRNQGKCVEGFVEIFDMLLATSSRFRMMNVQGEEFVCLKSIILLNSGIYTFLSSTLKSLEEKDHIHRVLDKIIDTLLHLMAKSGLSLQQQHRRLAQLLLILSHFRHMSNKGM</sequence>
<organism>
    <name type="scientific">Aspidoscelis uniparens</name>
    <name type="common">Desert grassland whiptail lizard</name>
    <name type="synonym">Cnemidophorus uniparens</name>
    <dbReference type="NCBI Taxonomy" id="37197"/>
    <lineage>
        <taxon>Eukaryota</taxon>
        <taxon>Metazoa</taxon>
        <taxon>Chordata</taxon>
        <taxon>Craniata</taxon>
        <taxon>Vertebrata</taxon>
        <taxon>Euteleostomi</taxon>
        <taxon>Lepidosauria</taxon>
        <taxon>Squamata</taxon>
        <taxon>Bifurcata</taxon>
        <taxon>Unidentata</taxon>
        <taxon>Episquamata</taxon>
        <taxon>Laterata</taxon>
        <taxon>Teiioidea</taxon>
        <taxon>Teiidae</taxon>
        <taxon>Aspidoscelis</taxon>
    </lineage>
</organism>
<name>ESR1_ASPUN</name>
<comment type="function">
    <text>The steroid hormones and their receptors are involved in the regulation of eukaryotic gene expression and affect cellular proliferation and differentiation in target tissues.</text>
</comment>
<comment type="subunit">
    <text evidence="1">Binds DNA as a homodimer. Can form a heterodimer with ER-beta (By similarity).</text>
</comment>
<comment type="subcellular location">
    <subcellularLocation>
        <location>Nucleus</location>
    </subcellularLocation>
</comment>
<comment type="domain">
    <text>Composed of three domains: a modulating N-terminal domain, a DNA-binding domain and a C-terminal ligand-binding domain.</text>
</comment>
<comment type="similarity">
    <text evidence="4">Belongs to the nuclear hormone receptor family. NR3 subfamily.</text>
</comment>
<keyword id="KW-0238">DNA-binding</keyword>
<keyword id="KW-0446">Lipid-binding</keyword>
<keyword id="KW-0479">Metal-binding</keyword>
<keyword id="KW-0539">Nucleus</keyword>
<keyword id="KW-0675">Receptor</keyword>
<keyword id="KW-0754">Steroid-binding</keyword>
<keyword id="KW-0804">Transcription</keyword>
<keyword id="KW-0805">Transcription regulation</keyword>
<keyword id="KW-0862">Zinc</keyword>
<keyword id="KW-0863">Zinc-finger</keyword>
<gene>
    <name type="primary">ESR1</name>
    <name type="synonym">ESR</name>
    <name type="synonym">NR3A1</name>
</gene>
<accession>Q91424</accession>
<evidence type="ECO:0000250" key="1"/>
<evidence type="ECO:0000255" key="2">
    <source>
        <dbReference type="PROSITE-ProRule" id="PRU00407"/>
    </source>
</evidence>
<evidence type="ECO:0000255" key="3">
    <source>
        <dbReference type="PROSITE-ProRule" id="PRU01189"/>
    </source>
</evidence>
<evidence type="ECO:0000305" key="4"/>
<dbReference type="EMBL" id="S79923">
    <property type="protein sequence ID" value="AAB35739.1"/>
    <property type="molecule type" value="mRNA"/>
</dbReference>
<dbReference type="SMR" id="Q91424"/>
<dbReference type="GO" id="GO:0005634">
    <property type="term" value="C:nucleus"/>
    <property type="evidence" value="ECO:0000250"/>
    <property type="project" value="UniProtKB"/>
</dbReference>
<dbReference type="GO" id="GO:0003700">
    <property type="term" value="F:DNA-binding transcription factor activity"/>
    <property type="evidence" value="ECO:0007669"/>
    <property type="project" value="InterPro"/>
</dbReference>
<dbReference type="GO" id="GO:0043565">
    <property type="term" value="F:sequence-specific DNA binding"/>
    <property type="evidence" value="ECO:0007669"/>
    <property type="project" value="InterPro"/>
</dbReference>
<dbReference type="GO" id="GO:0005496">
    <property type="term" value="F:steroid binding"/>
    <property type="evidence" value="ECO:0007669"/>
    <property type="project" value="UniProtKB-KW"/>
</dbReference>
<dbReference type="GO" id="GO:0008270">
    <property type="term" value="F:zinc ion binding"/>
    <property type="evidence" value="ECO:0007669"/>
    <property type="project" value="UniProtKB-KW"/>
</dbReference>
<dbReference type="CDD" id="cd06949">
    <property type="entry name" value="NR_LBD_ER"/>
    <property type="match status" value="1"/>
</dbReference>
<dbReference type="FunFam" id="1.10.565.10:FF:000010">
    <property type="entry name" value="Estrogen receptor"/>
    <property type="match status" value="1"/>
</dbReference>
<dbReference type="Gene3D" id="3.30.50.10">
    <property type="entry name" value="Erythroid Transcription Factor GATA-1, subunit A"/>
    <property type="match status" value="1"/>
</dbReference>
<dbReference type="Gene3D" id="1.10.565.10">
    <property type="entry name" value="Retinoid X Receptor"/>
    <property type="match status" value="1"/>
</dbReference>
<dbReference type="InterPro" id="IPR035500">
    <property type="entry name" value="NHR-like_dom_sf"/>
</dbReference>
<dbReference type="InterPro" id="IPR000536">
    <property type="entry name" value="Nucl_hrmn_rcpt_lig-bd"/>
</dbReference>
<dbReference type="InterPro" id="IPR050200">
    <property type="entry name" value="Nuclear_hormone_rcpt_NR3"/>
</dbReference>
<dbReference type="InterPro" id="IPR001723">
    <property type="entry name" value="Nuclear_hrmn_rcpt"/>
</dbReference>
<dbReference type="InterPro" id="IPR001628">
    <property type="entry name" value="Znf_hrmn_rcpt"/>
</dbReference>
<dbReference type="InterPro" id="IPR013088">
    <property type="entry name" value="Znf_NHR/GATA"/>
</dbReference>
<dbReference type="PANTHER" id="PTHR48092">
    <property type="entry name" value="KNIRPS-RELATED PROTEIN-RELATED"/>
    <property type="match status" value="1"/>
</dbReference>
<dbReference type="Pfam" id="PF00104">
    <property type="entry name" value="Hormone_recep"/>
    <property type="match status" value="1"/>
</dbReference>
<dbReference type="Pfam" id="PF00105">
    <property type="entry name" value="zf-C4"/>
    <property type="match status" value="1"/>
</dbReference>
<dbReference type="PRINTS" id="PR00398">
    <property type="entry name" value="STRDHORMONER"/>
</dbReference>
<dbReference type="SMART" id="SM00430">
    <property type="entry name" value="HOLI"/>
    <property type="match status" value="1"/>
</dbReference>
<dbReference type="SMART" id="SM00399">
    <property type="entry name" value="ZnF_C4"/>
    <property type="match status" value="1"/>
</dbReference>
<dbReference type="SUPFAM" id="SSF48508">
    <property type="entry name" value="Nuclear receptor ligand-binding domain"/>
    <property type="match status" value="1"/>
</dbReference>
<dbReference type="PROSITE" id="PS51843">
    <property type="entry name" value="NR_LBD"/>
    <property type="match status" value="1"/>
</dbReference>
<dbReference type="PROSITE" id="PS51030">
    <property type="entry name" value="NUCLEAR_REC_DBD_2"/>
    <property type="match status" value="1"/>
</dbReference>